<evidence type="ECO:0000269" key="1">
    <source>
    </source>
</evidence>
<evidence type="ECO:0000303" key="2">
    <source>
    </source>
</evidence>
<evidence type="ECO:0000305" key="3">
    <source>
    </source>
</evidence>
<name>CRY12_TITOB</name>
<feature type="peptide" id="PRO_0000461747" description="Cryptide Pep-12" evidence="1">
    <location>
        <begin position="1"/>
        <end position="9"/>
    </location>
</feature>
<reference key="1">
    <citation type="journal article" date="2018" name="J. Proteomics">
        <title>Profiling the short, linear, non-disulfide bond-containing peptidome from the venom of the scorpion Tityus obscurus.</title>
        <authorList>
            <person name="Dias N.B."/>
            <person name="de Souza B.M."/>
            <person name="Cocchi F.K."/>
            <person name="Chalkidis H.M."/>
            <person name="Dorce V.A.C."/>
            <person name="Palma M.S."/>
        </authorList>
    </citation>
    <scope>PROTEIN SEQUENCE</scope>
    <scope>IDENTIFICATION BY MASS SPECTROMETRY</scope>
    <scope>MASS SPECTROMETRY</scope>
    <scope>SUBCELLULAR LOCATION</scope>
    <scope>SYNTHESIS</scope>
    <scope>FUNCTION</scope>
    <scope>BIOASSAY</scope>
    <source>
        <tissue>Venom</tissue>
    </source>
</reference>
<keyword id="KW-0903">Direct protein sequencing</keyword>
<keyword id="KW-0964">Secreted</keyword>
<dbReference type="GO" id="GO:0005576">
    <property type="term" value="C:extracellular region"/>
    <property type="evidence" value="ECO:0007669"/>
    <property type="project" value="UniProtKB-SubCell"/>
</dbReference>
<comment type="function">
    <text evidence="1">Does not induce hemolytic activity, lactate dehydrogenase (LDH) release from mast cells, mast cell degranulation, and antimicrobial effects. In vivo, injection into mice induces increase in nociceptive sensibility and causes moderate edema formation. It also reduces locomotion, suggesting an increase in anxiety, but causes no alteration in rearing (standing on hind limbs).</text>
</comment>
<comment type="subcellular location">
    <subcellularLocation>
        <location evidence="1">Secreted</location>
    </subcellularLocation>
</comment>
<comment type="tissue specificity">
    <text evidence="3">Expressed by the venom gland.</text>
</comment>
<comment type="mass spectrometry" mass="1002.6" method="Electrospray" evidence="1"/>
<organism>
    <name type="scientific">Tityus obscurus</name>
    <name type="common">Amazonian scorpion</name>
    <name type="synonym">Tityus cambridgei</name>
    <dbReference type="NCBI Taxonomy" id="1221240"/>
    <lineage>
        <taxon>Eukaryota</taxon>
        <taxon>Metazoa</taxon>
        <taxon>Ecdysozoa</taxon>
        <taxon>Arthropoda</taxon>
        <taxon>Chelicerata</taxon>
        <taxon>Arachnida</taxon>
        <taxon>Scorpiones</taxon>
        <taxon>Buthida</taxon>
        <taxon>Buthoidea</taxon>
        <taxon>Buthidae</taxon>
        <taxon>Tityus</taxon>
    </lineage>
</organism>
<sequence length="9" mass="1003">ILTGKLKCK</sequence>
<protein>
    <recommendedName>
        <fullName evidence="2">Cryptide Pep-12</fullName>
    </recommendedName>
</protein>
<proteinExistence type="evidence at protein level"/>
<accession>P0DRF7</accession>